<gene>
    <name evidence="1" type="primary">ndhI</name>
</gene>
<feature type="chain" id="PRO_0000250814" description="NAD(P)H-quinone oxidoreductase subunit I, chloroplastic">
    <location>
        <begin position="1"/>
        <end position="166"/>
    </location>
</feature>
<feature type="domain" description="4Fe-4S ferredoxin-type 1" evidence="1">
    <location>
        <begin position="55"/>
        <end position="84"/>
    </location>
</feature>
<feature type="domain" description="4Fe-4S ferredoxin-type 2" evidence="1">
    <location>
        <begin position="95"/>
        <end position="124"/>
    </location>
</feature>
<feature type="binding site" evidence="1">
    <location>
        <position position="64"/>
    </location>
    <ligand>
        <name>[4Fe-4S] cluster</name>
        <dbReference type="ChEBI" id="CHEBI:49883"/>
        <label>1</label>
    </ligand>
</feature>
<feature type="binding site" evidence="1">
    <location>
        <position position="67"/>
    </location>
    <ligand>
        <name>[4Fe-4S] cluster</name>
        <dbReference type="ChEBI" id="CHEBI:49883"/>
        <label>1</label>
    </ligand>
</feature>
<feature type="binding site" evidence="1">
    <location>
        <position position="70"/>
    </location>
    <ligand>
        <name>[4Fe-4S] cluster</name>
        <dbReference type="ChEBI" id="CHEBI:49883"/>
        <label>1</label>
    </ligand>
</feature>
<feature type="binding site" evidence="1">
    <location>
        <position position="74"/>
    </location>
    <ligand>
        <name>[4Fe-4S] cluster</name>
        <dbReference type="ChEBI" id="CHEBI:49883"/>
        <label>2</label>
    </ligand>
</feature>
<feature type="binding site" evidence="1">
    <location>
        <position position="104"/>
    </location>
    <ligand>
        <name>[4Fe-4S] cluster</name>
        <dbReference type="ChEBI" id="CHEBI:49883"/>
        <label>2</label>
    </ligand>
</feature>
<feature type="binding site" evidence="1">
    <location>
        <position position="107"/>
    </location>
    <ligand>
        <name>[4Fe-4S] cluster</name>
        <dbReference type="ChEBI" id="CHEBI:49883"/>
        <label>2</label>
    </ligand>
</feature>
<feature type="binding site" evidence="1">
    <location>
        <position position="110"/>
    </location>
    <ligand>
        <name>[4Fe-4S] cluster</name>
        <dbReference type="ChEBI" id="CHEBI:49883"/>
        <label>2</label>
    </ligand>
</feature>
<feature type="binding site" evidence="1">
    <location>
        <position position="114"/>
    </location>
    <ligand>
        <name>[4Fe-4S] cluster</name>
        <dbReference type="ChEBI" id="CHEBI:49883"/>
        <label>1</label>
    </ligand>
</feature>
<comment type="function">
    <text evidence="1">NDH shuttles electrons from NAD(P)H:plastoquinone, via FMN and iron-sulfur (Fe-S) centers, to quinones in the photosynthetic chain and possibly in a chloroplast respiratory chain. The immediate electron acceptor for the enzyme in this species is believed to be plastoquinone. Couples the redox reaction to proton translocation, and thus conserves the redox energy in a proton gradient.</text>
</comment>
<comment type="catalytic activity">
    <reaction evidence="1">
        <text>a plastoquinone + NADH + (n+1) H(+)(in) = a plastoquinol + NAD(+) + n H(+)(out)</text>
        <dbReference type="Rhea" id="RHEA:42608"/>
        <dbReference type="Rhea" id="RHEA-COMP:9561"/>
        <dbReference type="Rhea" id="RHEA-COMP:9562"/>
        <dbReference type="ChEBI" id="CHEBI:15378"/>
        <dbReference type="ChEBI" id="CHEBI:17757"/>
        <dbReference type="ChEBI" id="CHEBI:57540"/>
        <dbReference type="ChEBI" id="CHEBI:57945"/>
        <dbReference type="ChEBI" id="CHEBI:62192"/>
    </reaction>
</comment>
<comment type="catalytic activity">
    <reaction evidence="1">
        <text>a plastoquinone + NADPH + (n+1) H(+)(in) = a plastoquinol + NADP(+) + n H(+)(out)</text>
        <dbReference type="Rhea" id="RHEA:42612"/>
        <dbReference type="Rhea" id="RHEA-COMP:9561"/>
        <dbReference type="Rhea" id="RHEA-COMP:9562"/>
        <dbReference type="ChEBI" id="CHEBI:15378"/>
        <dbReference type="ChEBI" id="CHEBI:17757"/>
        <dbReference type="ChEBI" id="CHEBI:57783"/>
        <dbReference type="ChEBI" id="CHEBI:58349"/>
        <dbReference type="ChEBI" id="CHEBI:62192"/>
    </reaction>
</comment>
<comment type="cofactor">
    <cofactor evidence="1">
        <name>[4Fe-4S] cluster</name>
        <dbReference type="ChEBI" id="CHEBI:49883"/>
    </cofactor>
    <text evidence="1">Binds 2 [4Fe-4S] clusters per subunit.</text>
</comment>
<comment type="subunit">
    <text evidence="1">NDH is composed of at least 16 different subunits, 5 of which are encoded in the nucleus.</text>
</comment>
<comment type="subcellular location">
    <subcellularLocation>
        <location evidence="1">Plastid</location>
        <location evidence="1">Chloroplast thylakoid membrane</location>
        <topology evidence="1">Peripheral membrane protein</topology>
    </subcellularLocation>
</comment>
<comment type="similarity">
    <text evidence="1">Belongs to the complex I 23 kDa subunit family.</text>
</comment>
<reference key="1">
    <citation type="submission" date="2003-01" db="EMBL/GenBank/DDBJ databases">
        <title>Chloroplast DNA phylogeny of tribe Heliantheae (Asteraceae).</title>
        <authorList>
            <person name="Panero J.L."/>
            <person name="Baldwin B.G."/>
            <person name="Schilling E.E."/>
            <person name="Clevinger J.A."/>
        </authorList>
    </citation>
    <scope>NUCLEOTIDE SEQUENCE [GENOMIC DNA]</scope>
</reference>
<keyword id="KW-0004">4Fe-4S</keyword>
<keyword id="KW-0150">Chloroplast</keyword>
<keyword id="KW-0408">Iron</keyword>
<keyword id="KW-0411">Iron-sulfur</keyword>
<keyword id="KW-0472">Membrane</keyword>
<keyword id="KW-0479">Metal-binding</keyword>
<keyword id="KW-0520">NAD</keyword>
<keyword id="KW-0521">NADP</keyword>
<keyword id="KW-0934">Plastid</keyword>
<keyword id="KW-0618">Plastoquinone</keyword>
<keyword id="KW-0874">Quinone</keyword>
<keyword id="KW-0677">Repeat</keyword>
<keyword id="KW-0793">Thylakoid</keyword>
<keyword id="KW-1278">Translocase</keyword>
<evidence type="ECO:0000255" key="1">
    <source>
        <dbReference type="HAMAP-Rule" id="MF_01351"/>
    </source>
</evidence>
<sequence>MFPMVTEFMNYGQQTVRAARYIGQGFMITLSHANRLPVTIQYPYEKLITSERFRGRIHFEFDKCIACEVCVRVCPIDLPVVDWKLETDIRKKRLLNYSIDFGICIFCGNCVEYCPTNCLSMTEEYELSTYDRHELNYNQIALGRLPMSVIDDYTIRTILNLSEIKT</sequence>
<geneLocation type="chloroplast"/>
<protein>
    <recommendedName>
        <fullName evidence="1">NAD(P)H-quinone oxidoreductase subunit I, chloroplastic</fullName>
        <ecNumber evidence="1">7.1.1.-</ecNumber>
    </recommendedName>
    <alternativeName>
        <fullName evidence="1">NAD(P)H dehydrogenase subunit I</fullName>
        <shortName evidence="1">NDH subunit I</shortName>
    </alternativeName>
    <alternativeName>
        <fullName evidence="1">NADH-plastoquinone oxidoreductase subunit I</fullName>
    </alternativeName>
</protein>
<proteinExistence type="inferred from homology"/>
<name>NDHI_MARCE</name>
<dbReference type="EC" id="7.1.1.-" evidence="1"/>
<dbReference type="EMBL" id="AF383816">
    <property type="protein sequence ID" value="AAN61757.1"/>
    <property type="molecule type" value="Genomic_DNA"/>
</dbReference>
<dbReference type="RefSeq" id="YP_009647792.1">
    <property type="nucleotide sequence ID" value="NC_042611.1"/>
</dbReference>
<dbReference type="SMR" id="Q8HVP7"/>
<dbReference type="GeneID" id="40413753"/>
<dbReference type="GO" id="GO:0009535">
    <property type="term" value="C:chloroplast thylakoid membrane"/>
    <property type="evidence" value="ECO:0007669"/>
    <property type="project" value="UniProtKB-SubCell"/>
</dbReference>
<dbReference type="GO" id="GO:0051539">
    <property type="term" value="F:4 iron, 4 sulfur cluster binding"/>
    <property type="evidence" value="ECO:0007669"/>
    <property type="project" value="UniProtKB-KW"/>
</dbReference>
<dbReference type="GO" id="GO:0005506">
    <property type="term" value="F:iron ion binding"/>
    <property type="evidence" value="ECO:0007669"/>
    <property type="project" value="UniProtKB-UniRule"/>
</dbReference>
<dbReference type="GO" id="GO:0008137">
    <property type="term" value="F:NADH dehydrogenase (ubiquinone) activity"/>
    <property type="evidence" value="ECO:0007669"/>
    <property type="project" value="InterPro"/>
</dbReference>
<dbReference type="GO" id="GO:0048038">
    <property type="term" value="F:quinone binding"/>
    <property type="evidence" value="ECO:0007669"/>
    <property type="project" value="UniProtKB-KW"/>
</dbReference>
<dbReference type="GO" id="GO:0019684">
    <property type="term" value="P:photosynthesis, light reaction"/>
    <property type="evidence" value="ECO:0007669"/>
    <property type="project" value="UniProtKB-UniRule"/>
</dbReference>
<dbReference type="FunFam" id="3.30.70.3270:FF:000006">
    <property type="entry name" value="NAD(P)H-quinone oxidoreductase subunit I, chloroplastic"/>
    <property type="match status" value="1"/>
</dbReference>
<dbReference type="Gene3D" id="3.30.70.3270">
    <property type="match status" value="1"/>
</dbReference>
<dbReference type="HAMAP" id="MF_01351">
    <property type="entry name" value="NDH1_NuoI"/>
    <property type="match status" value="1"/>
</dbReference>
<dbReference type="InterPro" id="IPR017896">
    <property type="entry name" value="4Fe4S_Fe-S-bd"/>
</dbReference>
<dbReference type="InterPro" id="IPR017900">
    <property type="entry name" value="4Fe4S_Fe_S_CS"/>
</dbReference>
<dbReference type="InterPro" id="IPR010226">
    <property type="entry name" value="NADH_quinone_OxRdtase_chainI"/>
</dbReference>
<dbReference type="InterPro" id="IPR004497">
    <property type="entry name" value="NDHI"/>
</dbReference>
<dbReference type="NCBIfam" id="TIGR00403">
    <property type="entry name" value="ndhI"/>
    <property type="match status" value="1"/>
</dbReference>
<dbReference type="NCBIfam" id="TIGR01971">
    <property type="entry name" value="NuoI"/>
    <property type="match status" value="1"/>
</dbReference>
<dbReference type="NCBIfam" id="NF004537">
    <property type="entry name" value="PRK05888.1-3"/>
    <property type="match status" value="1"/>
</dbReference>
<dbReference type="PANTHER" id="PTHR47275">
    <property type="entry name" value="NAD(P)H-QUINONE OXIDOREDUCTASE SUBUNIT I, CHLOROPLASTIC"/>
    <property type="match status" value="1"/>
</dbReference>
<dbReference type="PANTHER" id="PTHR47275:SF1">
    <property type="entry name" value="NAD(P)H-QUINONE OXIDOREDUCTASE SUBUNIT I, CHLOROPLASTIC"/>
    <property type="match status" value="1"/>
</dbReference>
<dbReference type="Pfam" id="PF00037">
    <property type="entry name" value="Fer4"/>
    <property type="match status" value="2"/>
</dbReference>
<dbReference type="SUPFAM" id="SSF54862">
    <property type="entry name" value="4Fe-4S ferredoxins"/>
    <property type="match status" value="1"/>
</dbReference>
<dbReference type="PROSITE" id="PS00198">
    <property type="entry name" value="4FE4S_FER_1"/>
    <property type="match status" value="2"/>
</dbReference>
<dbReference type="PROSITE" id="PS51379">
    <property type="entry name" value="4FE4S_FER_2"/>
    <property type="match status" value="2"/>
</dbReference>
<organism>
    <name type="scientific">Marshallia caespitosa</name>
    <name type="common">Barbara's buttons</name>
    <dbReference type="NCBI Taxonomy" id="41604"/>
    <lineage>
        <taxon>Eukaryota</taxon>
        <taxon>Viridiplantae</taxon>
        <taxon>Streptophyta</taxon>
        <taxon>Embryophyta</taxon>
        <taxon>Tracheophyta</taxon>
        <taxon>Spermatophyta</taxon>
        <taxon>Magnoliopsida</taxon>
        <taxon>eudicotyledons</taxon>
        <taxon>Gunneridae</taxon>
        <taxon>Pentapetalae</taxon>
        <taxon>asterids</taxon>
        <taxon>campanulids</taxon>
        <taxon>Asterales</taxon>
        <taxon>Asteraceae</taxon>
        <taxon>Asteroideae</taxon>
        <taxon>Heliantheae alliance</taxon>
        <taxon>Helenieae</taxon>
        <taxon>Marshalliinae</taxon>
        <taxon>Marshallia</taxon>
    </lineage>
</organism>
<accession>Q8HVP7</accession>